<sequence>MSYNCCSGNFSSRSFGGYLHYPGCNPYSTALCSPSICQLGSSLYRNCQKTCWEPTSCRKSCYRRRTSMLCSPCQTTCSRSLGFGSSSCHSQGYGSRSCYSLGSGSSGFRFLKYGGCGFPSLSYGSRFCYPNYLASRAWQSSCYRPICGSRFYQFTC</sequence>
<protein>
    <recommendedName>
        <fullName>Keratin-associated protein 13-4</fullName>
    </recommendedName>
</protein>
<comment type="function">
    <text>In the hair cortex, hair keratin intermediate filaments are embedded in an interfilamentous matrix, consisting of hair keratin-associated proteins (KRTAP), which are essential for the formation of a rigid and resistant hair shaft through their extensive disulfide bond cross-linking with abundant cysteine residues of hair keratins. The matrix proteins include the high-sulfur and high-glycine-tyrosine keratins.</text>
</comment>
<comment type="subunit">
    <text>Interacts with hair keratins.</text>
</comment>
<comment type="similarity">
    <text evidence="1">Belongs to the PMG family.</text>
</comment>
<proteinExistence type="inferred from homology"/>
<feature type="chain" id="PRO_0000185208" description="Keratin-associated protein 13-4">
    <location>
        <begin position="1"/>
        <end position="156"/>
    </location>
</feature>
<feature type="repeat" description="1">
    <location>
        <begin position="37"/>
        <end position="46"/>
    </location>
</feature>
<feature type="repeat" description="2">
    <location>
        <begin position="47"/>
        <end position="56"/>
    </location>
</feature>
<feature type="repeat" description="3">
    <location>
        <begin position="57"/>
        <end position="66"/>
    </location>
</feature>
<feature type="repeat" description="4">
    <location>
        <begin position="73"/>
        <end position="82"/>
    </location>
</feature>
<feature type="region of interest" description="4 X 10 AA approximate repeats">
    <location>
        <begin position="37"/>
        <end position="82"/>
    </location>
</feature>
<evidence type="ECO:0000305" key="1"/>
<reference key="1">
    <citation type="submission" date="2004-11" db="EMBL/GenBank/DDBJ databases">
        <title>Comparative analysis of KAP13.3 and KAP13.4 genes in primates.</title>
        <authorList>
            <person name="Kim H."/>
            <person name="Park E."/>
        </authorList>
    </citation>
    <scope>NUCLEOTIDE SEQUENCE [GENOMIC DNA]</scope>
</reference>
<gene>
    <name type="primary">KRTAP13-4</name>
    <name type="synonym">KAP13.4</name>
</gene>
<accession>Q4W7G8</accession>
<dbReference type="EMBL" id="AB195302">
    <property type="protein sequence ID" value="BAD98709.1"/>
    <property type="molecule type" value="Genomic_DNA"/>
</dbReference>
<dbReference type="GO" id="GO:0005829">
    <property type="term" value="C:cytosol"/>
    <property type="evidence" value="ECO:0007669"/>
    <property type="project" value="UniProtKB-ARBA"/>
</dbReference>
<dbReference type="GO" id="GO:0005882">
    <property type="term" value="C:intermediate filament"/>
    <property type="evidence" value="ECO:0007669"/>
    <property type="project" value="UniProtKB-KW"/>
</dbReference>
<dbReference type="InterPro" id="IPR007951">
    <property type="entry name" value="KRTAP_PMG"/>
</dbReference>
<dbReference type="InterPro" id="IPR001368">
    <property type="entry name" value="TNFR/NGFR_Cys_rich_reg"/>
</dbReference>
<dbReference type="Pfam" id="PF05287">
    <property type="entry name" value="PMG"/>
    <property type="match status" value="1"/>
</dbReference>
<organism>
    <name type="scientific">Macaca fuscata fuscata</name>
    <name type="common">Japanese macaque</name>
    <dbReference type="NCBI Taxonomy" id="9543"/>
    <lineage>
        <taxon>Eukaryota</taxon>
        <taxon>Metazoa</taxon>
        <taxon>Chordata</taxon>
        <taxon>Craniata</taxon>
        <taxon>Vertebrata</taxon>
        <taxon>Euteleostomi</taxon>
        <taxon>Mammalia</taxon>
        <taxon>Eutheria</taxon>
        <taxon>Euarchontoglires</taxon>
        <taxon>Primates</taxon>
        <taxon>Haplorrhini</taxon>
        <taxon>Catarrhini</taxon>
        <taxon>Cercopithecidae</taxon>
        <taxon>Cercopithecinae</taxon>
        <taxon>Macaca</taxon>
    </lineage>
</organism>
<name>KR134_MACFU</name>
<keyword id="KW-0416">Keratin</keyword>
<keyword id="KW-0677">Repeat</keyword>